<sequence length="264" mass="30385">MKKLKLHGFNNLTKSLSFCIYDICYAKTAEERDGYIAYIDELYNANRLTEILSETCSIIGANILNIARQDYEPQGASVTILVSEEPVDPKLIDKTEHPGPLPETVVAHLDKSHICVHTYPESHPEGGLCTFRADIEVSTCGVISPLKALNYLIHQLESDIVTIDYRVRGFTRDINGMKHFIDHEINSIQNFMSDDMKALYDMVDVNVYQENIFHTKMLLKEFDLKHYMFHTKPEDLTDSERQEITAALWKEMREIYYGRNMPAV</sequence>
<reference key="1">
    <citation type="journal article" date="2006" name="BMC Genomics">
        <title>Complete genome sequence of Shigella flexneri 5b and comparison with Shigella flexneri 2a.</title>
        <authorList>
            <person name="Nie H."/>
            <person name="Yang F."/>
            <person name="Zhang X."/>
            <person name="Yang J."/>
            <person name="Chen L."/>
            <person name="Wang J."/>
            <person name="Xiong Z."/>
            <person name="Peng J."/>
            <person name="Sun L."/>
            <person name="Dong J."/>
            <person name="Xue Y."/>
            <person name="Xu X."/>
            <person name="Chen S."/>
            <person name="Yao Z."/>
            <person name="Shen Y."/>
            <person name="Jin Q."/>
        </authorList>
    </citation>
    <scope>NUCLEOTIDE SEQUENCE [LARGE SCALE GENOMIC DNA]</scope>
    <source>
        <strain>8401</strain>
    </source>
</reference>
<comment type="function">
    <text evidence="1">Catalyzes the decarboxylation of S-adenosylmethionine to S-adenosylmethioninamine (dcAdoMet), the propylamine donor required for the synthesis of the polyamines spermine and spermidine from the diamine putrescine.</text>
</comment>
<comment type="catalytic activity">
    <reaction evidence="1">
        <text>S-adenosyl-L-methionine + H(+) = S-adenosyl 3-(methylsulfanyl)propylamine + CO2</text>
        <dbReference type="Rhea" id="RHEA:15981"/>
        <dbReference type="ChEBI" id="CHEBI:15378"/>
        <dbReference type="ChEBI" id="CHEBI:16526"/>
        <dbReference type="ChEBI" id="CHEBI:57443"/>
        <dbReference type="ChEBI" id="CHEBI:59789"/>
        <dbReference type="EC" id="4.1.1.50"/>
    </reaction>
</comment>
<comment type="cofactor">
    <cofactor evidence="1">
        <name>pyruvate</name>
        <dbReference type="ChEBI" id="CHEBI:15361"/>
    </cofactor>
    <text evidence="1">Binds 1 pyruvoyl group covalently per subunit.</text>
</comment>
<comment type="pathway">
    <text evidence="1">Amine and polyamine biosynthesis; S-adenosylmethioninamine biosynthesis; S-adenosylmethioninamine from S-adenosyl-L-methionine: step 1/1.</text>
</comment>
<comment type="subunit">
    <text evidence="1">Heterooctamer of four alpha and four beta chains arranged as a tetramer of alpha/beta heterodimers.</text>
</comment>
<comment type="PTM">
    <text evidence="1">Is synthesized initially as an inactive proenzyme. Formation of the active enzyme involves a self-maturation process in which the active site pyruvoyl group is generated from an internal serine residue via an autocatalytic post-translational modification. Two non-identical subunits are generated from the proenzyme in this reaction, and the pyruvate is formed at the N-terminus of the alpha chain, which is derived from the carboxyl end of the proenzyme. The post-translation cleavage follows an unusual pathway, termed non-hydrolytic serinolysis, in which the side chain hydroxyl group of the serine supplies its oxygen atom to form the C-terminus of the beta chain, while the remainder of the serine residue undergoes an oxidative deamination to produce ammonia and the pyruvoyl group blocking the N-terminus of the alpha chain.</text>
</comment>
<comment type="similarity">
    <text evidence="1">Belongs to the prokaryotic AdoMetDC family. Type 2 subfamily.</text>
</comment>
<proteinExistence type="inferred from homology"/>
<organism>
    <name type="scientific">Shigella flexneri serotype 5b (strain 8401)</name>
    <dbReference type="NCBI Taxonomy" id="373384"/>
    <lineage>
        <taxon>Bacteria</taxon>
        <taxon>Pseudomonadati</taxon>
        <taxon>Pseudomonadota</taxon>
        <taxon>Gammaproteobacteria</taxon>
        <taxon>Enterobacterales</taxon>
        <taxon>Enterobacteriaceae</taxon>
        <taxon>Shigella</taxon>
    </lineage>
</organism>
<keyword id="KW-0068">Autocatalytic cleavage</keyword>
<keyword id="KW-0210">Decarboxylase</keyword>
<keyword id="KW-0456">Lyase</keyword>
<keyword id="KW-0620">Polyamine biosynthesis</keyword>
<keyword id="KW-0670">Pyruvate</keyword>
<keyword id="KW-0949">S-adenosyl-L-methionine</keyword>
<keyword id="KW-0704">Schiff base</keyword>
<keyword id="KW-0745">Spermidine biosynthesis</keyword>
<keyword id="KW-0865">Zymogen</keyword>
<name>SPED_SHIF8</name>
<feature type="chain" id="PRO_1000013692" description="S-adenosylmethionine decarboxylase beta chain" evidence="1">
    <location>
        <begin position="1"/>
        <end position="111"/>
    </location>
</feature>
<feature type="chain" id="PRO_0000315018" description="S-adenosylmethionine decarboxylase alpha chain" evidence="1">
    <location>
        <begin position="112"/>
        <end position="264"/>
    </location>
</feature>
<feature type="active site" description="Schiff-base intermediate with substrate; via pyruvic acid" evidence="1">
    <location>
        <position position="112"/>
    </location>
</feature>
<feature type="active site" description="Proton acceptor; for processing activity" evidence="1">
    <location>
        <position position="117"/>
    </location>
</feature>
<feature type="active site" description="Proton donor; for catalytic activity" evidence="1">
    <location>
        <position position="140"/>
    </location>
</feature>
<feature type="site" description="Cleavage (non-hydrolytic); by autolysis" evidence="1">
    <location>
        <begin position="111"/>
        <end position="112"/>
    </location>
</feature>
<feature type="modified residue" description="Pyruvic acid (Ser); by autocatalysis" evidence="1">
    <location>
        <position position="112"/>
    </location>
</feature>
<dbReference type="EC" id="4.1.1.50" evidence="1"/>
<dbReference type="EMBL" id="CP000266">
    <property type="protein sequence ID" value="ABF02396.1"/>
    <property type="molecule type" value="Genomic_DNA"/>
</dbReference>
<dbReference type="RefSeq" id="WP_000734287.1">
    <property type="nucleotide sequence ID" value="NC_008258.1"/>
</dbReference>
<dbReference type="GeneID" id="93777316"/>
<dbReference type="KEGG" id="sfv:SFV_0111"/>
<dbReference type="HOGENOM" id="CLU_092007_0_0_6"/>
<dbReference type="UniPathway" id="UPA00331">
    <property type="reaction ID" value="UER00451"/>
</dbReference>
<dbReference type="Proteomes" id="UP000000659">
    <property type="component" value="Chromosome"/>
</dbReference>
<dbReference type="GO" id="GO:0005829">
    <property type="term" value="C:cytosol"/>
    <property type="evidence" value="ECO:0007669"/>
    <property type="project" value="TreeGrafter"/>
</dbReference>
<dbReference type="GO" id="GO:0004014">
    <property type="term" value="F:adenosylmethionine decarboxylase activity"/>
    <property type="evidence" value="ECO:0007669"/>
    <property type="project" value="UniProtKB-UniRule"/>
</dbReference>
<dbReference type="GO" id="GO:0008295">
    <property type="term" value="P:spermidine biosynthetic process"/>
    <property type="evidence" value="ECO:0007669"/>
    <property type="project" value="UniProtKB-UniRule"/>
</dbReference>
<dbReference type="FunFam" id="3.60.90.10:FF:000001">
    <property type="entry name" value="S-adenosylmethionine decarboxylase proenzyme"/>
    <property type="match status" value="1"/>
</dbReference>
<dbReference type="Gene3D" id="3.60.90.10">
    <property type="entry name" value="S-adenosylmethionine decarboxylase"/>
    <property type="match status" value="1"/>
</dbReference>
<dbReference type="HAMAP" id="MF_00465">
    <property type="entry name" value="AdoMetDC_2"/>
    <property type="match status" value="1"/>
</dbReference>
<dbReference type="InterPro" id="IPR003826">
    <property type="entry name" value="AdoMetDC_fam_prok"/>
</dbReference>
<dbReference type="InterPro" id="IPR009165">
    <property type="entry name" value="S-AdoMet_deCO2ase_bac"/>
</dbReference>
<dbReference type="InterPro" id="IPR016067">
    <property type="entry name" value="S-AdoMet_deCO2ase_core"/>
</dbReference>
<dbReference type="NCBIfam" id="TIGR03331">
    <property type="entry name" value="SAM_DCase_Eco"/>
    <property type="match status" value="1"/>
</dbReference>
<dbReference type="PANTHER" id="PTHR33866">
    <property type="entry name" value="S-ADENOSYLMETHIONINE DECARBOXYLASE PROENZYME"/>
    <property type="match status" value="1"/>
</dbReference>
<dbReference type="PANTHER" id="PTHR33866:SF1">
    <property type="entry name" value="S-ADENOSYLMETHIONINE DECARBOXYLASE PROENZYME"/>
    <property type="match status" value="1"/>
</dbReference>
<dbReference type="Pfam" id="PF02675">
    <property type="entry name" value="AdoMet_dc"/>
    <property type="match status" value="1"/>
</dbReference>
<dbReference type="PIRSF" id="PIRSF001356">
    <property type="entry name" value="SAM_decarboxylas"/>
    <property type="match status" value="1"/>
</dbReference>
<dbReference type="SUPFAM" id="SSF56276">
    <property type="entry name" value="S-adenosylmethionine decarboxylase"/>
    <property type="match status" value="1"/>
</dbReference>
<gene>
    <name evidence="1" type="primary">speD</name>
    <name type="ordered locus">SFV_0111</name>
</gene>
<accession>Q0T880</accession>
<protein>
    <recommendedName>
        <fullName evidence="1">S-adenosylmethionine decarboxylase proenzyme</fullName>
        <shortName evidence="1">AdoMetDC</shortName>
        <shortName evidence="1">SAMDC</shortName>
        <ecNumber evidence="1">4.1.1.50</ecNumber>
    </recommendedName>
    <component>
        <recommendedName>
            <fullName evidence="1">S-adenosylmethionine decarboxylase beta chain</fullName>
        </recommendedName>
    </component>
    <component>
        <recommendedName>
            <fullName evidence="1">S-adenosylmethionine decarboxylase alpha chain</fullName>
        </recommendedName>
    </component>
</protein>
<evidence type="ECO:0000255" key="1">
    <source>
        <dbReference type="HAMAP-Rule" id="MF_00465"/>
    </source>
</evidence>